<gene>
    <name type="primary">miaB</name>
    <name type="ordered locus">Haur_1047</name>
</gene>
<dbReference type="EC" id="2.8.4.3"/>
<dbReference type="EMBL" id="CP000875">
    <property type="protein sequence ID" value="ABX03695.1"/>
    <property type="molecule type" value="Genomic_DNA"/>
</dbReference>
<dbReference type="SMR" id="A9AZY8"/>
<dbReference type="FunCoup" id="A9AZY8">
    <property type="interactions" value="503"/>
</dbReference>
<dbReference type="STRING" id="316274.Haur_1047"/>
<dbReference type="KEGG" id="hau:Haur_1047"/>
<dbReference type="eggNOG" id="COG0621">
    <property type="taxonomic scope" value="Bacteria"/>
</dbReference>
<dbReference type="HOGENOM" id="CLU_018697_2_0_0"/>
<dbReference type="InParanoid" id="A9AZY8"/>
<dbReference type="Proteomes" id="UP000000787">
    <property type="component" value="Chromosome"/>
</dbReference>
<dbReference type="GO" id="GO:0005829">
    <property type="term" value="C:cytosol"/>
    <property type="evidence" value="ECO:0007669"/>
    <property type="project" value="TreeGrafter"/>
</dbReference>
<dbReference type="GO" id="GO:0051539">
    <property type="term" value="F:4 iron, 4 sulfur cluster binding"/>
    <property type="evidence" value="ECO:0007669"/>
    <property type="project" value="UniProtKB-KW"/>
</dbReference>
<dbReference type="GO" id="GO:0046872">
    <property type="term" value="F:metal ion binding"/>
    <property type="evidence" value="ECO:0007669"/>
    <property type="project" value="UniProtKB-KW"/>
</dbReference>
<dbReference type="GO" id="GO:0035597">
    <property type="term" value="F:N6-isopentenyladenosine methylthiotransferase activity"/>
    <property type="evidence" value="ECO:0007669"/>
    <property type="project" value="TreeGrafter"/>
</dbReference>
<dbReference type="CDD" id="cd01335">
    <property type="entry name" value="Radical_SAM"/>
    <property type="match status" value="1"/>
</dbReference>
<dbReference type="FunFam" id="3.40.50.12160:FF:000003">
    <property type="entry name" value="CDK5 regulatory subunit-associated protein 1"/>
    <property type="match status" value="1"/>
</dbReference>
<dbReference type="FunFam" id="3.80.30.20:FF:000001">
    <property type="entry name" value="tRNA-2-methylthio-N(6)-dimethylallyladenosine synthase 2"/>
    <property type="match status" value="1"/>
</dbReference>
<dbReference type="Gene3D" id="3.40.50.12160">
    <property type="entry name" value="Methylthiotransferase, N-terminal domain"/>
    <property type="match status" value="1"/>
</dbReference>
<dbReference type="Gene3D" id="3.80.30.20">
    <property type="entry name" value="tm_1862 like domain"/>
    <property type="match status" value="1"/>
</dbReference>
<dbReference type="InterPro" id="IPR006638">
    <property type="entry name" value="Elp3/MiaA/NifB-like_rSAM"/>
</dbReference>
<dbReference type="InterPro" id="IPR005839">
    <property type="entry name" value="Methylthiotransferase"/>
</dbReference>
<dbReference type="InterPro" id="IPR020612">
    <property type="entry name" value="Methylthiotransferase_CS"/>
</dbReference>
<dbReference type="InterPro" id="IPR013848">
    <property type="entry name" value="Methylthiotransferase_N"/>
</dbReference>
<dbReference type="InterPro" id="IPR038135">
    <property type="entry name" value="Methylthiotransferase_N_sf"/>
</dbReference>
<dbReference type="InterPro" id="IPR000385">
    <property type="entry name" value="MoaA_NifB_PqqE_Fe-S-bd_CS"/>
</dbReference>
<dbReference type="InterPro" id="IPR007197">
    <property type="entry name" value="rSAM"/>
</dbReference>
<dbReference type="InterPro" id="IPR023404">
    <property type="entry name" value="rSAM_horseshoe"/>
</dbReference>
<dbReference type="InterPro" id="IPR002792">
    <property type="entry name" value="TRAM_dom"/>
</dbReference>
<dbReference type="NCBIfam" id="TIGR01574">
    <property type="entry name" value="miaB-methiolase"/>
    <property type="match status" value="1"/>
</dbReference>
<dbReference type="NCBIfam" id="TIGR00089">
    <property type="entry name" value="MiaB/RimO family radical SAM methylthiotransferase"/>
    <property type="match status" value="1"/>
</dbReference>
<dbReference type="PANTHER" id="PTHR43020">
    <property type="entry name" value="CDK5 REGULATORY SUBUNIT-ASSOCIATED PROTEIN 1"/>
    <property type="match status" value="1"/>
</dbReference>
<dbReference type="PANTHER" id="PTHR43020:SF2">
    <property type="entry name" value="MITOCHONDRIAL TRNA METHYLTHIOTRANSFERASE CDK5RAP1"/>
    <property type="match status" value="1"/>
</dbReference>
<dbReference type="Pfam" id="PF04055">
    <property type="entry name" value="Radical_SAM"/>
    <property type="match status" value="1"/>
</dbReference>
<dbReference type="Pfam" id="PF01938">
    <property type="entry name" value="TRAM"/>
    <property type="match status" value="1"/>
</dbReference>
<dbReference type="Pfam" id="PF00919">
    <property type="entry name" value="UPF0004"/>
    <property type="match status" value="1"/>
</dbReference>
<dbReference type="SFLD" id="SFLDG01082">
    <property type="entry name" value="B12-binding_domain_containing"/>
    <property type="match status" value="1"/>
</dbReference>
<dbReference type="SFLD" id="SFLDG01061">
    <property type="entry name" value="methylthiotransferase"/>
    <property type="match status" value="1"/>
</dbReference>
<dbReference type="SFLD" id="SFLDS00029">
    <property type="entry name" value="Radical_SAM"/>
    <property type="match status" value="1"/>
</dbReference>
<dbReference type="SMART" id="SM00729">
    <property type="entry name" value="Elp3"/>
    <property type="match status" value="1"/>
</dbReference>
<dbReference type="SUPFAM" id="SSF102114">
    <property type="entry name" value="Radical SAM enzymes"/>
    <property type="match status" value="1"/>
</dbReference>
<dbReference type="PROSITE" id="PS51449">
    <property type="entry name" value="MTTASE_N"/>
    <property type="match status" value="1"/>
</dbReference>
<dbReference type="PROSITE" id="PS01278">
    <property type="entry name" value="MTTASE_RADICAL"/>
    <property type="match status" value="1"/>
</dbReference>
<dbReference type="PROSITE" id="PS51918">
    <property type="entry name" value="RADICAL_SAM"/>
    <property type="match status" value="1"/>
</dbReference>
<dbReference type="PROSITE" id="PS50926">
    <property type="entry name" value="TRAM"/>
    <property type="match status" value="1"/>
</dbReference>
<reference key="1">
    <citation type="journal article" date="2011" name="Stand. Genomic Sci.">
        <title>Complete genome sequence of the filamentous gliding predatory bacterium Herpetosiphon aurantiacus type strain (114-95(T)).</title>
        <authorList>
            <person name="Kiss H."/>
            <person name="Nett M."/>
            <person name="Domin N."/>
            <person name="Martin K."/>
            <person name="Maresca J.A."/>
            <person name="Copeland A."/>
            <person name="Lapidus A."/>
            <person name="Lucas S."/>
            <person name="Berry K.W."/>
            <person name="Glavina Del Rio T."/>
            <person name="Dalin E."/>
            <person name="Tice H."/>
            <person name="Pitluck S."/>
            <person name="Richardson P."/>
            <person name="Bruce D."/>
            <person name="Goodwin L."/>
            <person name="Han C."/>
            <person name="Detter J.C."/>
            <person name="Schmutz J."/>
            <person name="Brettin T."/>
            <person name="Land M."/>
            <person name="Hauser L."/>
            <person name="Kyrpides N.C."/>
            <person name="Ivanova N."/>
            <person name="Goeker M."/>
            <person name="Woyke T."/>
            <person name="Klenk H.P."/>
            <person name="Bryant D.A."/>
        </authorList>
    </citation>
    <scope>NUCLEOTIDE SEQUENCE [LARGE SCALE GENOMIC DNA]</scope>
    <source>
        <strain>ATCC 23779 / DSM 785 / 114-95</strain>
    </source>
</reference>
<proteinExistence type="inferred from homology"/>
<feature type="chain" id="PRO_0000374342" description="tRNA-2-methylthio-N(6)-dimethylallyladenosine synthase">
    <location>
        <begin position="1"/>
        <end position="438"/>
    </location>
</feature>
<feature type="domain" description="MTTase N-terminal" evidence="3">
    <location>
        <begin position="4"/>
        <end position="125"/>
    </location>
</feature>
<feature type="domain" description="Radical SAM core" evidence="4">
    <location>
        <begin position="134"/>
        <end position="368"/>
    </location>
</feature>
<feature type="domain" description="TRAM" evidence="2">
    <location>
        <begin position="371"/>
        <end position="431"/>
    </location>
</feature>
<feature type="binding site" evidence="3">
    <location>
        <position position="13"/>
    </location>
    <ligand>
        <name>[4Fe-4S] cluster</name>
        <dbReference type="ChEBI" id="CHEBI:49883"/>
        <label>1</label>
    </ligand>
</feature>
<feature type="binding site" evidence="3">
    <location>
        <position position="49"/>
    </location>
    <ligand>
        <name>[4Fe-4S] cluster</name>
        <dbReference type="ChEBI" id="CHEBI:49883"/>
        <label>1</label>
    </ligand>
</feature>
<feature type="binding site" evidence="3">
    <location>
        <position position="83"/>
    </location>
    <ligand>
        <name>[4Fe-4S] cluster</name>
        <dbReference type="ChEBI" id="CHEBI:49883"/>
        <label>1</label>
    </ligand>
</feature>
<feature type="binding site" evidence="3">
    <location>
        <position position="148"/>
    </location>
    <ligand>
        <name>[4Fe-4S] cluster</name>
        <dbReference type="ChEBI" id="CHEBI:49883"/>
        <label>2</label>
        <note>4Fe-4S-S-AdoMet</note>
    </ligand>
</feature>
<feature type="binding site" evidence="3">
    <location>
        <position position="152"/>
    </location>
    <ligand>
        <name>[4Fe-4S] cluster</name>
        <dbReference type="ChEBI" id="CHEBI:49883"/>
        <label>2</label>
        <note>4Fe-4S-S-AdoMet</note>
    </ligand>
</feature>
<feature type="binding site" evidence="3">
    <location>
        <position position="155"/>
    </location>
    <ligand>
        <name>[4Fe-4S] cluster</name>
        <dbReference type="ChEBI" id="CHEBI:49883"/>
        <label>2</label>
        <note>4Fe-4S-S-AdoMet</note>
    </ligand>
</feature>
<comment type="function">
    <text evidence="1">Catalyzes the methylthiolation of N6-(dimethylallyl)adenosine (i(6)A), leading to the formation of 2-methylthio-N6-(dimethylallyl)adenosine (ms(2)i(6)A) at position 37 in tRNAs that read codons beginning with uridine.</text>
</comment>
<comment type="catalytic activity">
    <reaction>
        <text>N(6)-dimethylallyladenosine(37) in tRNA + (sulfur carrier)-SH + AH2 + 2 S-adenosyl-L-methionine = 2-methylsulfanyl-N(6)-dimethylallyladenosine(37) in tRNA + (sulfur carrier)-H + 5'-deoxyadenosine + L-methionine + A + S-adenosyl-L-homocysteine + 2 H(+)</text>
        <dbReference type="Rhea" id="RHEA:37067"/>
        <dbReference type="Rhea" id="RHEA-COMP:10375"/>
        <dbReference type="Rhea" id="RHEA-COMP:10376"/>
        <dbReference type="Rhea" id="RHEA-COMP:14737"/>
        <dbReference type="Rhea" id="RHEA-COMP:14739"/>
        <dbReference type="ChEBI" id="CHEBI:13193"/>
        <dbReference type="ChEBI" id="CHEBI:15378"/>
        <dbReference type="ChEBI" id="CHEBI:17319"/>
        <dbReference type="ChEBI" id="CHEBI:17499"/>
        <dbReference type="ChEBI" id="CHEBI:29917"/>
        <dbReference type="ChEBI" id="CHEBI:57844"/>
        <dbReference type="ChEBI" id="CHEBI:57856"/>
        <dbReference type="ChEBI" id="CHEBI:59789"/>
        <dbReference type="ChEBI" id="CHEBI:64428"/>
        <dbReference type="ChEBI" id="CHEBI:74415"/>
        <dbReference type="ChEBI" id="CHEBI:74417"/>
        <dbReference type="EC" id="2.8.4.3"/>
    </reaction>
</comment>
<comment type="cofactor">
    <cofactor evidence="3">
        <name>[4Fe-4S] cluster</name>
        <dbReference type="ChEBI" id="CHEBI:49883"/>
    </cofactor>
    <text evidence="3">Binds 2 [4Fe-4S] clusters. One cluster is coordinated with 3 cysteines and an exchangeable S-adenosyl-L-methionine.</text>
</comment>
<comment type="subunit">
    <text evidence="1">Monomer.</text>
</comment>
<comment type="subcellular location">
    <subcellularLocation>
        <location evidence="3">Cytoplasm</location>
    </subcellularLocation>
</comment>
<comment type="similarity">
    <text evidence="5">Belongs to the methylthiotransferase family. MiaB subfamily.</text>
</comment>
<keyword id="KW-0004">4Fe-4S</keyword>
<keyword id="KW-0963">Cytoplasm</keyword>
<keyword id="KW-0408">Iron</keyword>
<keyword id="KW-0411">Iron-sulfur</keyword>
<keyword id="KW-0479">Metal-binding</keyword>
<keyword id="KW-0949">S-adenosyl-L-methionine</keyword>
<keyword id="KW-0808">Transferase</keyword>
<keyword id="KW-0819">tRNA processing</keyword>
<sequence>MERNRYFVWTVGCQMNVSDSERLESALQGVGYTPAEQAEDADFIVLNSCSVRANAEEKIIGKITDIQRIKRERPDTKIVLWGCMVGPNNQSIFKKKLPMVDHFVSPSAVDEVLALAPNPIYQLDEPALPVADWQVPPVNVHVPINYGCNMSCAYCVIPLRRGKERSRPMEEIAEEVRRICARGAKEITLLGQIVDSYGHDLPGRPDLADLLEYLHETPGLVRLRFLTSHPAFMSEKLLHTIARLPKVMPDINLPIQAGDDQLLKVMKRGYTVAKYTKLIERIREIIPNVSLSTDIIVGHPGETREMFERTLEMVENIRFDKVHIAAYSSRPGTKAADMELDPALAVEHGEKQYRRIALERLQERIATERNEECLGHEVEVLVEEFTKGKWRGRDRNNKLVFFEADGDWYGKVVNIHVTETRPWWLGGNLIGETLAIGA</sequence>
<organism>
    <name type="scientific">Herpetosiphon aurantiacus (strain ATCC 23779 / DSM 785 / 114-95)</name>
    <dbReference type="NCBI Taxonomy" id="316274"/>
    <lineage>
        <taxon>Bacteria</taxon>
        <taxon>Bacillati</taxon>
        <taxon>Chloroflexota</taxon>
        <taxon>Chloroflexia</taxon>
        <taxon>Herpetosiphonales</taxon>
        <taxon>Herpetosiphonaceae</taxon>
        <taxon>Herpetosiphon</taxon>
    </lineage>
</organism>
<protein>
    <recommendedName>
        <fullName>tRNA-2-methylthio-N(6)-dimethylallyladenosine synthase</fullName>
        <ecNumber>2.8.4.3</ecNumber>
    </recommendedName>
    <alternativeName>
        <fullName>(Dimethylallyl)adenosine tRNA methylthiotransferase MiaB</fullName>
    </alternativeName>
    <alternativeName>
        <fullName>tRNA-i(6)A37 methylthiotransferase</fullName>
    </alternativeName>
</protein>
<evidence type="ECO:0000250" key="1"/>
<evidence type="ECO:0000255" key="2">
    <source>
        <dbReference type="PROSITE-ProRule" id="PRU00208"/>
    </source>
</evidence>
<evidence type="ECO:0000255" key="3">
    <source>
        <dbReference type="PROSITE-ProRule" id="PRU00780"/>
    </source>
</evidence>
<evidence type="ECO:0000255" key="4">
    <source>
        <dbReference type="PROSITE-ProRule" id="PRU01266"/>
    </source>
</evidence>
<evidence type="ECO:0000305" key="5"/>
<name>MIAB_HERA2</name>
<accession>A9AZY8</accession>